<name>PGLRA_ASPKW</name>
<sequence>MPSAKPLFCLATLAGAALAAPAPSRATDFNKRSTCTFTDAATASESKTSCSDIVLKDITVPAGETLNLKDLNDGTTVTFEGTTTWEYEEWDGPLLRISGKDITVTQSSDAVLNGNGAKWWDGEGTNGGKTKPKFFYAHDLDDSKISGLYIKNTPVQAISVESDNLVIEDVTIDNSDGDSEGGHNTDGFDISESTYITITGATVKNQDDCVAINSGENIYFSGGTCSGGHGLSIGSVGGRDDNTVKNVTFIDSTVSDSENGVRIKTVYDATGTVEDITYSNIQLSGISDYGIVIEQDYENGDPTGTPSNGVTISDVTLEDITGSVDSDAVEIYILCGDGSCTDWTMSGIDITGGETSSDCENVPSGASCSQ</sequence>
<keyword id="KW-0961">Cell wall biogenesis/degradation</keyword>
<keyword id="KW-1015">Disulfide bond</keyword>
<keyword id="KW-0325">Glycoprotein</keyword>
<keyword id="KW-0326">Glycosidase</keyword>
<keyword id="KW-0378">Hydrolase</keyword>
<keyword id="KW-0677">Repeat</keyword>
<keyword id="KW-0964">Secreted</keyword>
<keyword id="KW-0732">Signal</keyword>
<keyword id="KW-0865">Zymogen</keyword>
<proteinExistence type="inferred from homology"/>
<gene>
    <name type="primary">pgaA</name>
    <name type="synonym">pecA</name>
    <name type="ORF">AKAW_03292</name>
</gene>
<accession>Q8NK99</accession>
<accession>G7XE19</accession>
<reference key="1">
    <citation type="submission" date="2002-02" db="EMBL/GenBank/DDBJ databases">
        <title>Purification and properties of PgaA and PgaB.</title>
        <authorList>
            <person name="Mikami S."/>
        </authorList>
    </citation>
    <scope>NUCLEOTIDE SEQUENCE [GENOMIC DNA]</scope>
    <source>
        <strain>NBRC 4308</strain>
    </source>
</reference>
<reference key="2">
    <citation type="journal article" date="2011" name="Eukaryot. Cell">
        <title>Genome sequence of the white koji mold Aspergillus kawachii IFO 4308, used for brewing the Japanese distilled spirit shochu.</title>
        <authorList>
            <person name="Futagami T."/>
            <person name="Mori K."/>
            <person name="Yamashita A."/>
            <person name="Wada S."/>
            <person name="Kajiwara Y."/>
            <person name="Takashita H."/>
            <person name="Omori T."/>
            <person name="Takegawa K."/>
            <person name="Tashiro K."/>
            <person name="Kuhara S."/>
            <person name="Goto M."/>
        </authorList>
    </citation>
    <scope>NUCLEOTIDE SEQUENCE [LARGE SCALE GENOMIC DNA]</scope>
    <source>
        <strain>NBRC 4308</strain>
    </source>
</reference>
<evidence type="ECO:0000250" key="1"/>
<evidence type="ECO:0000255" key="2"/>
<evidence type="ECO:0000255" key="3">
    <source>
        <dbReference type="PROSITE-ProRule" id="PRU10052"/>
    </source>
</evidence>
<evidence type="ECO:0000305" key="4"/>
<feature type="signal peptide" evidence="2">
    <location>
        <begin position="1"/>
        <end position="19"/>
    </location>
</feature>
<feature type="propeptide" id="PRO_0000393639" evidence="2">
    <location>
        <begin position="20"/>
        <end position="32"/>
    </location>
</feature>
<feature type="chain" id="PRO_0000393640" description="Probable endopolygalacturonase A">
    <location>
        <begin position="33"/>
        <end position="370"/>
    </location>
</feature>
<feature type="repeat" description="PbH1 1">
    <location>
        <begin position="162"/>
        <end position="192"/>
    </location>
</feature>
<feature type="repeat" description="PbH1 2">
    <location>
        <begin position="193"/>
        <end position="214"/>
    </location>
</feature>
<feature type="repeat" description="PbH1 3">
    <location>
        <begin position="215"/>
        <end position="235"/>
    </location>
</feature>
<feature type="repeat" description="PbH1 4">
    <location>
        <begin position="244"/>
        <end position="265"/>
    </location>
</feature>
<feature type="repeat" description="PbH1 5">
    <location>
        <begin position="273"/>
        <end position="295"/>
    </location>
</feature>
<feature type="repeat" description="PbH1 6">
    <location>
        <begin position="307"/>
        <end position="352"/>
    </location>
</feature>
<feature type="active site" description="Proton donor" evidence="3">
    <location>
        <position position="207"/>
    </location>
</feature>
<feature type="active site" evidence="3">
    <location>
        <position position="229"/>
    </location>
</feature>
<feature type="glycosylation site" description="N-linked (GlcNAc...) asparagine" evidence="2">
    <location>
        <position position="246"/>
    </location>
</feature>
<feature type="disulfide bond" evidence="1">
    <location>
        <begin position="35"/>
        <end position="50"/>
    </location>
</feature>
<feature type="disulfide bond" evidence="1">
    <location>
        <begin position="209"/>
        <end position="225"/>
    </location>
</feature>
<feature type="disulfide bond" evidence="1">
    <location>
        <begin position="335"/>
        <end position="340"/>
    </location>
</feature>
<feature type="disulfide bond" evidence="1">
    <location>
        <begin position="359"/>
        <end position="368"/>
    </location>
</feature>
<organism>
    <name type="scientific">Aspergillus kawachii (strain NBRC 4308)</name>
    <name type="common">White koji mold</name>
    <name type="synonym">Aspergillus awamori var. kawachi</name>
    <dbReference type="NCBI Taxonomy" id="1033177"/>
    <lineage>
        <taxon>Eukaryota</taxon>
        <taxon>Fungi</taxon>
        <taxon>Dikarya</taxon>
        <taxon>Ascomycota</taxon>
        <taxon>Pezizomycotina</taxon>
        <taxon>Eurotiomycetes</taxon>
        <taxon>Eurotiomycetidae</taxon>
        <taxon>Eurotiales</taxon>
        <taxon>Aspergillaceae</taxon>
        <taxon>Aspergillus</taxon>
        <taxon>Aspergillus subgen. Circumdati</taxon>
    </lineage>
</organism>
<dbReference type="EC" id="3.2.1.15"/>
<dbReference type="EMBL" id="AB080269">
    <property type="protein sequence ID" value="BAC10596.1"/>
    <property type="molecule type" value="Genomic_DNA"/>
</dbReference>
<dbReference type="EMBL" id="DF126452">
    <property type="protein sequence ID" value="GAA85178.1"/>
    <property type="molecule type" value="Genomic_DNA"/>
</dbReference>
<dbReference type="SMR" id="Q8NK99"/>
<dbReference type="FunCoup" id="Q8NK99">
    <property type="interactions" value="140"/>
</dbReference>
<dbReference type="STRING" id="1033177.Q8NK99"/>
<dbReference type="CAZy" id="GH28">
    <property type="family name" value="Glycoside Hydrolase Family 28"/>
</dbReference>
<dbReference type="GlyCosmos" id="Q8NK99">
    <property type="glycosylation" value="1 site, No reported glycans"/>
</dbReference>
<dbReference type="VEuPathDB" id="FungiDB:AKAW_03292"/>
<dbReference type="eggNOG" id="ENOG502QST2">
    <property type="taxonomic scope" value="Eukaryota"/>
</dbReference>
<dbReference type="InParanoid" id="Q8NK99"/>
<dbReference type="OrthoDB" id="98443at5052"/>
<dbReference type="GO" id="GO:0005576">
    <property type="term" value="C:extracellular region"/>
    <property type="evidence" value="ECO:0000250"/>
    <property type="project" value="UniProtKB"/>
</dbReference>
<dbReference type="GO" id="GO:0004650">
    <property type="term" value="F:polygalacturonase activity"/>
    <property type="evidence" value="ECO:0000250"/>
    <property type="project" value="UniProtKB"/>
</dbReference>
<dbReference type="GO" id="GO:0071555">
    <property type="term" value="P:cell wall organization"/>
    <property type="evidence" value="ECO:0007669"/>
    <property type="project" value="UniProtKB-KW"/>
</dbReference>
<dbReference type="GO" id="GO:0045490">
    <property type="term" value="P:pectin catabolic process"/>
    <property type="evidence" value="ECO:0000250"/>
    <property type="project" value="UniProtKB"/>
</dbReference>
<dbReference type="FunFam" id="2.160.20.10:FF:000002">
    <property type="entry name" value="Endopolygalacturonase D"/>
    <property type="match status" value="1"/>
</dbReference>
<dbReference type="Gene3D" id="2.160.20.10">
    <property type="entry name" value="Single-stranded right-handed beta-helix, Pectin lyase-like"/>
    <property type="match status" value="1"/>
</dbReference>
<dbReference type="InterPro" id="IPR000743">
    <property type="entry name" value="Glyco_hydro_28"/>
</dbReference>
<dbReference type="InterPro" id="IPR050434">
    <property type="entry name" value="Glycosyl_hydrlase_28"/>
</dbReference>
<dbReference type="InterPro" id="IPR006626">
    <property type="entry name" value="PbH1"/>
</dbReference>
<dbReference type="InterPro" id="IPR012334">
    <property type="entry name" value="Pectin_lyas_fold"/>
</dbReference>
<dbReference type="InterPro" id="IPR011050">
    <property type="entry name" value="Pectin_lyase_fold/virulence"/>
</dbReference>
<dbReference type="PANTHER" id="PTHR31884:SF13">
    <property type="entry name" value="ENDOPOLYGALACTURONASE B"/>
    <property type="match status" value="1"/>
</dbReference>
<dbReference type="PANTHER" id="PTHR31884">
    <property type="entry name" value="POLYGALACTURONASE"/>
    <property type="match status" value="1"/>
</dbReference>
<dbReference type="Pfam" id="PF00295">
    <property type="entry name" value="Glyco_hydro_28"/>
    <property type="match status" value="1"/>
</dbReference>
<dbReference type="SMART" id="SM00710">
    <property type="entry name" value="PbH1"/>
    <property type="match status" value="6"/>
</dbReference>
<dbReference type="SUPFAM" id="SSF51126">
    <property type="entry name" value="Pectin lyase-like"/>
    <property type="match status" value="1"/>
</dbReference>
<dbReference type="PROSITE" id="PS00502">
    <property type="entry name" value="POLYGALACTURONASE"/>
    <property type="match status" value="1"/>
</dbReference>
<protein>
    <recommendedName>
        <fullName>Probable endopolygalacturonase A</fullName>
        <ecNumber>3.2.1.15</ecNumber>
    </recommendedName>
    <alternativeName>
        <fullName>Pectinase A</fullName>
    </alternativeName>
    <alternativeName>
        <fullName>Polygalacturonase A</fullName>
    </alternativeName>
</protein>
<comment type="function">
    <text evidence="1">Involved in maceration and soft-rotting of plant tissue. Hydrolyzes the 1,4-alpha glycosidic bonds of de-esterified pectate in the smooth region of the plant cell wall (By similarity).</text>
</comment>
<comment type="catalytic activity">
    <reaction>
        <text>(1,4-alpha-D-galacturonosyl)n+m + H2O = (1,4-alpha-D-galacturonosyl)n + (1,4-alpha-D-galacturonosyl)m.</text>
        <dbReference type="EC" id="3.2.1.15"/>
    </reaction>
</comment>
<comment type="subcellular location">
    <subcellularLocation>
        <location evidence="1">Secreted</location>
    </subcellularLocation>
</comment>
<comment type="similarity">
    <text evidence="4">Belongs to the glycosyl hydrolase 28 family.</text>
</comment>